<proteinExistence type="inferred from homology"/>
<name>RPOC_CHLTR</name>
<dbReference type="EC" id="2.7.7.6" evidence="1"/>
<dbReference type="EMBL" id="AE001273">
    <property type="protein sequence ID" value="AAC67907.1"/>
    <property type="molecule type" value="Genomic_DNA"/>
</dbReference>
<dbReference type="PIR" id="G71529">
    <property type="entry name" value="G71529"/>
</dbReference>
<dbReference type="RefSeq" id="NP_219819.1">
    <property type="nucleotide sequence ID" value="NC_000117.1"/>
</dbReference>
<dbReference type="RefSeq" id="WP_009871661.1">
    <property type="nucleotide sequence ID" value="NC_000117.1"/>
</dbReference>
<dbReference type="SMR" id="O84316"/>
<dbReference type="FunCoup" id="O84316">
    <property type="interactions" value="229"/>
</dbReference>
<dbReference type="STRING" id="272561.CT_314"/>
<dbReference type="EnsemblBacteria" id="AAC67907">
    <property type="protein sequence ID" value="AAC67907"/>
    <property type="gene ID" value="CT_314"/>
</dbReference>
<dbReference type="GeneID" id="884808"/>
<dbReference type="KEGG" id="ctr:CT_314"/>
<dbReference type="PATRIC" id="fig|272561.5.peg.336"/>
<dbReference type="HOGENOM" id="CLU_000524_3_1_0"/>
<dbReference type="InParanoid" id="O84316"/>
<dbReference type="OrthoDB" id="9815296at2"/>
<dbReference type="Proteomes" id="UP000000431">
    <property type="component" value="Chromosome"/>
</dbReference>
<dbReference type="GO" id="GO:0000428">
    <property type="term" value="C:DNA-directed RNA polymerase complex"/>
    <property type="evidence" value="ECO:0007669"/>
    <property type="project" value="UniProtKB-KW"/>
</dbReference>
<dbReference type="GO" id="GO:0003677">
    <property type="term" value="F:DNA binding"/>
    <property type="evidence" value="ECO:0007669"/>
    <property type="project" value="UniProtKB-UniRule"/>
</dbReference>
<dbReference type="GO" id="GO:0003899">
    <property type="term" value="F:DNA-directed RNA polymerase activity"/>
    <property type="evidence" value="ECO:0007669"/>
    <property type="project" value="UniProtKB-UniRule"/>
</dbReference>
<dbReference type="GO" id="GO:0000287">
    <property type="term" value="F:magnesium ion binding"/>
    <property type="evidence" value="ECO:0007669"/>
    <property type="project" value="UniProtKB-UniRule"/>
</dbReference>
<dbReference type="GO" id="GO:0008270">
    <property type="term" value="F:zinc ion binding"/>
    <property type="evidence" value="ECO:0007669"/>
    <property type="project" value="UniProtKB-UniRule"/>
</dbReference>
<dbReference type="GO" id="GO:0006351">
    <property type="term" value="P:DNA-templated transcription"/>
    <property type="evidence" value="ECO:0007669"/>
    <property type="project" value="UniProtKB-UniRule"/>
</dbReference>
<dbReference type="CDD" id="cd02655">
    <property type="entry name" value="RNAP_beta'_C"/>
    <property type="match status" value="1"/>
</dbReference>
<dbReference type="CDD" id="cd01609">
    <property type="entry name" value="RNAP_beta'_N"/>
    <property type="match status" value="1"/>
</dbReference>
<dbReference type="Gene3D" id="1.10.132.30">
    <property type="match status" value="1"/>
</dbReference>
<dbReference type="Gene3D" id="1.10.150.390">
    <property type="match status" value="1"/>
</dbReference>
<dbReference type="Gene3D" id="1.10.1790.20">
    <property type="match status" value="1"/>
</dbReference>
<dbReference type="Gene3D" id="1.10.40.90">
    <property type="match status" value="1"/>
</dbReference>
<dbReference type="Gene3D" id="2.40.40.20">
    <property type="match status" value="1"/>
</dbReference>
<dbReference type="Gene3D" id="2.40.50.100">
    <property type="match status" value="3"/>
</dbReference>
<dbReference type="Gene3D" id="4.10.860.120">
    <property type="entry name" value="RNA polymerase II, clamp domain"/>
    <property type="match status" value="1"/>
</dbReference>
<dbReference type="Gene3D" id="1.10.274.100">
    <property type="entry name" value="RNA polymerase Rpb1, domain 3"/>
    <property type="match status" value="1"/>
</dbReference>
<dbReference type="HAMAP" id="MF_01322">
    <property type="entry name" value="RNApol_bact_RpoC"/>
    <property type="match status" value="1"/>
</dbReference>
<dbReference type="InterPro" id="IPR045867">
    <property type="entry name" value="DNA-dir_RpoC_beta_prime"/>
</dbReference>
<dbReference type="InterPro" id="IPR012754">
    <property type="entry name" value="DNA-dir_RpoC_beta_prime_bact"/>
</dbReference>
<dbReference type="InterPro" id="IPR000722">
    <property type="entry name" value="RNA_pol_asu"/>
</dbReference>
<dbReference type="InterPro" id="IPR006592">
    <property type="entry name" value="RNA_pol_N"/>
</dbReference>
<dbReference type="InterPro" id="IPR007080">
    <property type="entry name" value="RNA_pol_Rpb1_1"/>
</dbReference>
<dbReference type="InterPro" id="IPR007066">
    <property type="entry name" value="RNA_pol_Rpb1_3"/>
</dbReference>
<dbReference type="InterPro" id="IPR042102">
    <property type="entry name" value="RNA_pol_Rpb1_3_sf"/>
</dbReference>
<dbReference type="InterPro" id="IPR007083">
    <property type="entry name" value="RNA_pol_Rpb1_4"/>
</dbReference>
<dbReference type="InterPro" id="IPR007081">
    <property type="entry name" value="RNA_pol_Rpb1_5"/>
</dbReference>
<dbReference type="InterPro" id="IPR044893">
    <property type="entry name" value="RNA_pol_Rpb1_clamp_domain"/>
</dbReference>
<dbReference type="InterPro" id="IPR038120">
    <property type="entry name" value="Rpb1_funnel_sf"/>
</dbReference>
<dbReference type="NCBIfam" id="TIGR02386">
    <property type="entry name" value="rpoC_TIGR"/>
    <property type="match status" value="1"/>
</dbReference>
<dbReference type="PANTHER" id="PTHR19376">
    <property type="entry name" value="DNA-DIRECTED RNA POLYMERASE"/>
    <property type="match status" value="1"/>
</dbReference>
<dbReference type="PANTHER" id="PTHR19376:SF54">
    <property type="entry name" value="DNA-DIRECTED RNA POLYMERASE SUBUNIT BETA"/>
    <property type="match status" value="1"/>
</dbReference>
<dbReference type="Pfam" id="PF04997">
    <property type="entry name" value="RNA_pol_Rpb1_1"/>
    <property type="match status" value="1"/>
</dbReference>
<dbReference type="Pfam" id="PF00623">
    <property type="entry name" value="RNA_pol_Rpb1_2"/>
    <property type="match status" value="1"/>
</dbReference>
<dbReference type="Pfam" id="PF04983">
    <property type="entry name" value="RNA_pol_Rpb1_3"/>
    <property type="match status" value="1"/>
</dbReference>
<dbReference type="Pfam" id="PF05000">
    <property type="entry name" value="RNA_pol_Rpb1_4"/>
    <property type="match status" value="1"/>
</dbReference>
<dbReference type="Pfam" id="PF04998">
    <property type="entry name" value="RNA_pol_Rpb1_5"/>
    <property type="match status" value="1"/>
</dbReference>
<dbReference type="SMART" id="SM00663">
    <property type="entry name" value="RPOLA_N"/>
    <property type="match status" value="1"/>
</dbReference>
<dbReference type="SUPFAM" id="SSF64484">
    <property type="entry name" value="beta and beta-prime subunits of DNA dependent RNA-polymerase"/>
    <property type="match status" value="1"/>
</dbReference>
<accession>O84316</accession>
<organism>
    <name type="scientific">Chlamydia trachomatis serovar D (strain ATCC VR-885 / DSM 19411 / UW-3/Cx)</name>
    <dbReference type="NCBI Taxonomy" id="272561"/>
    <lineage>
        <taxon>Bacteria</taxon>
        <taxon>Pseudomonadati</taxon>
        <taxon>Chlamydiota</taxon>
        <taxon>Chlamydiia</taxon>
        <taxon>Chlamydiales</taxon>
        <taxon>Chlamydiaceae</taxon>
        <taxon>Chlamydia/Chlamydophila group</taxon>
        <taxon>Chlamydia</taxon>
    </lineage>
</organism>
<keyword id="KW-0240">DNA-directed RNA polymerase</keyword>
<keyword id="KW-0460">Magnesium</keyword>
<keyword id="KW-0479">Metal-binding</keyword>
<keyword id="KW-0548">Nucleotidyltransferase</keyword>
<keyword id="KW-1185">Reference proteome</keyword>
<keyword id="KW-0804">Transcription</keyword>
<keyword id="KW-0808">Transferase</keyword>
<keyword id="KW-0862">Zinc</keyword>
<protein>
    <recommendedName>
        <fullName evidence="1">DNA-directed RNA polymerase subunit beta'</fullName>
        <shortName evidence="1">RNAP subunit beta'</shortName>
        <ecNumber evidence="1">2.7.7.6</ecNumber>
    </recommendedName>
    <alternativeName>
        <fullName evidence="1">RNA polymerase subunit beta'</fullName>
    </alternativeName>
    <alternativeName>
        <fullName evidence="1">Transcriptase subunit beta'</fullName>
    </alternativeName>
</protein>
<sequence length="1396" mass="154905">MFREGSRDDAALVKEGLFDKLEIGIASDVTIRDKWSCGEIKKPETINYRTFKPEKGGLFCEKIFGPTKDWECYCGKYKKIKHKGIVCDRCGVEVTLSKVRRERMAHIELAVPIVHIWFFKTTPSRIGNVLGMTASDLERVIYYEEYVVIDPGNTDLVKKQLLNDAKYREVVEKWGKDAFVAKMGGEAVYDLLKSEDLESLLGELKERLRKTKSQQARMKLAKRLKIVEGFVSSSNRPEWMVLKNIPVVPPDLRPLVPLDGGRFATSDLNDLYRRVINRNNRLKAILRLKTPEVIVRNEKRMLQEAVDALFDNGRHGHPVMGAGNRPLKSLSEMLKGKNGRFRQNLLGKRVDYSGRSVIIVGPELKFNQCGLPKEMALELFEPFIIKRLKDQGSVYTIRSAKKMIQRGAPEVWDVLEEIIKGHPVLLNRAPTLHRLGIQAFEPVLIEGKAIRVHPLVCAAFNADFDGDQMAVHVPLSIEAQLEAKVLMMAPDNIFLPSSGKPVATPSKDMTLGIYYLMADPTYFPEEHGGKTKAFKDEVEVLRALNAGGFILKDEICGSRRDETGRGIHIHEKIKVRIDGQIIETTPGRVFFNTIVPKELGFQNYSMPSKRISELILQCYKKVGLEATVRFLDDLKELGFVQSTKAAISMGLKDVKIPEIKKEILKDAYDKVAVVKKQYEDGIITDGERHSKTISIWTEVSDLLSNALYSEIKKQTNSKHNPLFLMIDSGARGNKSQLKQLGALRGLMAKPNGAIIESPITSNFREGLTVLEYSISSHGARKGLADTALKTADSGYLTRRLVDVAQDVIITERDCGTLNHIEVSTIRQGSEELLPLKDRVYGRTVSENIYQPGDKSNVLAYAGDVLTSAQAEAIDDAGIESVKIRSTLTCESRRGVCAKCYGLNLANGRLIGLGEAVGIIAAQSIGEPGTQLTMRTFHLGGIAATSSTPEIVAECDGILVYLDLRVVVDQEGNNLVLNKMGALHLVQDEGRSLSEYKKLLSTKSIESLATFPVELGAKILVNDGAAVAAGQRIAEVELHNIPIICDKPGFVHYEDLVEGVSTEKVTNKNTGLVELIVKQHRGELHPQIAIYADANMKELVGTYAIPSGAIISVEEGQRIAPGMLLARLPRGAIKTKDITGGLPRVAELVEARKPEDAADIAKIDGVVDFKGIQKNKRILVVRDEITGMEEEHLISLTKHLIVQRGDSVIKGQQLTDGLVVPHEILEICGVRELQKYLVNEVQEVYRLQGVDINDKHVEIIVRQMLQKVRITDPGDTTLLFGEDVDKKEFYEENRRTEEDGGKPAQAVPVLLGITKASLGTESFISAASFQDTTRVLTDAACSSKTDYLLGFKENVIMGHMIPGGTGFDTHKRIKQHLEKEQEDLVFDFDSEFESVAG</sequence>
<reference key="1">
    <citation type="journal article" date="1998" name="Science">
        <title>Genome sequence of an obligate intracellular pathogen of humans: Chlamydia trachomatis.</title>
        <authorList>
            <person name="Stephens R.S."/>
            <person name="Kalman S."/>
            <person name="Lammel C.J."/>
            <person name="Fan J."/>
            <person name="Marathe R."/>
            <person name="Aravind L."/>
            <person name="Mitchell W.P."/>
            <person name="Olinger L."/>
            <person name="Tatusov R.L."/>
            <person name="Zhao Q."/>
            <person name="Koonin E.V."/>
            <person name="Davis R.W."/>
        </authorList>
    </citation>
    <scope>NUCLEOTIDE SEQUENCE [LARGE SCALE GENOMIC DNA]</scope>
    <source>
        <strain>ATCC VR-885 / DSM 19411 / UW-3/Cx</strain>
    </source>
</reference>
<evidence type="ECO:0000255" key="1">
    <source>
        <dbReference type="HAMAP-Rule" id="MF_01322"/>
    </source>
</evidence>
<comment type="function">
    <text evidence="1">DNA-dependent RNA polymerase catalyzes the transcription of DNA into RNA using the four ribonucleoside triphosphates as substrates.</text>
</comment>
<comment type="catalytic activity">
    <reaction evidence="1">
        <text>RNA(n) + a ribonucleoside 5'-triphosphate = RNA(n+1) + diphosphate</text>
        <dbReference type="Rhea" id="RHEA:21248"/>
        <dbReference type="Rhea" id="RHEA-COMP:14527"/>
        <dbReference type="Rhea" id="RHEA-COMP:17342"/>
        <dbReference type="ChEBI" id="CHEBI:33019"/>
        <dbReference type="ChEBI" id="CHEBI:61557"/>
        <dbReference type="ChEBI" id="CHEBI:140395"/>
        <dbReference type="EC" id="2.7.7.6"/>
    </reaction>
</comment>
<comment type="cofactor">
    <cofactor evidence="1">
        <name>Mg(2+)</name>
        <dbReference type="ChEBI" id="CHEBI:18420"/>
    </cofactor>
    <text evidence="1">Binds 1 Mg(2+) ion per subunit.</text>
</comment>
<comment type="cofactor">
    <cofactor evidence="1">
        <name>Zn(2+)</name>
        <dbReference type="ChEBI" id="CHEBI:29105"/>
    </cofactor>
    <text evidence="1">Binds 2 Zn(2+) ions per subunit.</text>
</comment>
<comment type="subunit">
    <text evidence="1">The RNAP catalytic core consists of 2 alpha, 1 beta, 1 beta' and 1 omega subunit. When a sigma factor is associated with the core the holoenzyme is formed, which can initiate transcription.</text>
</comment>
<comment type="similarity">
    <text evidence="1">Belongs to the RNA polymerase beta' chain family.</text>
</comment>
<gene>
    <name evidence="1" type="primary">rpoC</name>
    <name type="ordered locus">CT_314</name>
</gene>
<feature type="chain" id="PRO_0000067730" description="DNA-directed RNA polymerase subunit beta'">
    <location>
        <begin position="1"/>
        <end position="1396"/>
    </location>
</feature>
<feature type="binding site" evidence="1">
    <location>
        <position position="72"/>
    </location>
    <ligand>
        <name>Zn(2+)</name>
        <dbReference type="ChEBI" id="CHEBI:29105"/>
        <label>1</label>
    </ligand>
</feature>
<feature type="binding site" evidence="1">
    <location>
        <position position="74"/>
    </location>
    <ligand>
        <name>Zn(2+)</name>
        <dbReference type="ChEBI" id="CHEBI:29105"/>
        <label>1</label>
    </ligand>
</feature>
<feature type="binding site" evidence="1">
    <location>
        <position position="87"/>
    </location>
    <ligand>
        <name>Zn(2+)</name>
        <dbReference type="ChEBI" id="CHEBI:29105"/>
        <label>1</label>
    </ligand>
</feature>
<feature type="binding site" evidence="1">
    <location>
        <position position="90"/>
    </location>
    <ligand>
        <name>Zn(2+)</name>
        <dbReference type="ChEBI" id="CHEBI:29105"/>
        <label>1</label>
    </ligand>
</feature>
<feature type="binding site" evidence="1">
    <location>
        <position position="463"/>
    </location>
    <ligand>
        <name>Mg(2+)</name>
        <dbReference type="ChEBI" id="CHEBI:18420"/>
    </ligand>
</feature>
<feature type="binding site" evidence="1">
    <location>
        <position position="465"/>
    </location>
    <ligand>
        <name>Mg(2+)</name>
        <dbReference type="ChEBI" id="CHEBI:18420"/>
    </ligand>
</feature>
<feature type="binding site" evidence="1">
    <location>
        <position position="467"/>
    </location>
    <ligand>
        <name>Mg(2+)</name>
        <dbReference type="ChEBI" id="CHEBI:18420"/>
    </ligand>
</feature>
<feature type="binding site" evidence="1">
    <location>
        <position position="814"/>
    </location>
    <ligand>
        <name>Zn(2+)</name>
        <dbReference type="ChEBI" id="CHEBI:29105"/>
        <label>2</label>
    </ligand>
</feature>
<feature type="binding site" evidence="1">
    <location>
        <position position="889"/>
    </location>
    <ligand>
        <name>Zn(2+)</name>
        <dbReference type="ChEBI" id="CHEBI:29105"/>
        <label>2</label>
    </ligand>
</feature>
<feature type="binding site" evidence="1">
    <location>
        <position position="896"/>
    </location>
    <ligand>
        <name>Zn(2+)</name>
        <dbReference type="ChEBI" id="CHEBI:29105"/>
        <label>2</label>
    </ligand>
</feature>
<feature type="binding site" evidence="1">
    <location>
        <position position="899"/>
    </location>
    <ligand>
        <name>Zn(2+)</name>
        <dbReference type="ChEBI" id="CHEBI:29105"/>
        <label>2</label>
    </ligand>
</feature>